<feature type="chain" id="PRO_1000057772" description="Deoxyuridine 5'-triphosphate nucleotidohydrolase">
    <location>
        <begin position="1"/>
        <end position="152"/>
    </location>
</feature>
<feature type="binding site" evidence="1">
    <location>
        <begin position="71"/>
        <end position="73"/>
    </location>
    <ligand>
        <name>substrate</name>
    </ligand>
</feature>
<feature type="binding site" evidence="1">
    <location>
        <position position="84"/>
    </location>
    <ligand>
        <name>substrate</name>
    </ligand>
</feature>
<feature type="binding site" evidence="1">
    <location>
        <begin position="88"/>
        <end position="90"/>
    </location>
    <ligand>
        <name>substrate</name>
    </ligand>
</feature>
<feature type="binding site" evidence="1">
    <location>
        <position position="98"/>
    </location>
    <ligand>
        <name>substrate</name>
    </ligand>
</feature>
<keyword id="KW-0378">Hydrolase</keyword>
<keyword id="KW-0460">Magnesium</keyword>
<keyword id="KW-0479">Metal-binding</keyword>
<keyword id="KW-0546">Nucleotide metabolism</keyword>
<keyword id="KW-1185">Reference proteome</keyword>
<gene>
    <name evidence="1" type="primary">dut</name>
    <name type="ordered locus">ESA_04092</name>
</gene>
<protein>
    <recommendedName>
        <fullName evidence="1">Deoxyuridine 5'-triphosphate nucleotidohydrolase</fullName>
        <shortName evidence="1">dUTPase</shortName>
        <ecNumber evidence="1">3.6.1.23</ecNumber>
    </recommendedName>
    <alternativeName>
        <fullName evidence="1">dUTP pyrophosphatase</fullName>
    </alternativeName>
</protein>
<dbReference type="EC" id="3.6.1.23" evidence="1"/>
<dbReference type="EMBL" id="CP000783">
    <property type="protein sequence ID" value="ABU79273.1"/>
    <property type="molecule type" value="Genomic_DNA"/>
</dbReference>
<dbReference type="RefSeq" id="WP_012126242.1">
    <property type="nucleotide sequence ID" value="NC_009778.1"/>
</dbReference>
<dbReference type="SMR" id="A7MQ93"/>
<dbReference type="KEGG" id="esa:ESA_04092"/>
<dbReference type="PATRIC" id="fig|290339.8.peg.3633"/>
<dbReference type="HOGENOM" id="CLU_068508_1_1_6"/>
<dbReference type="UniPathway" id="UPA00610">
    <property type="reaction ID" value="UER00666"/>
</dbReference>
<dbReference type="Proteomes" id="UP000000260">
    <property type="component" value="Chromosome"/>
</dbReference>
<dbReference type="GO" id="GO:0004170">
    <property type="term" value="F:dUTP diphosphatase activity"/>
    <property type="evidence" value="ECO:0007669"/>
    <property type="project" value="UniProtKB-UniRule"/>
</dbReference>
<dbReference type="GO" id="GO:0000287">
    <property type="term" value="F:magnesium ion binding"/>
    <property type="evidence" value="ECO:0007669"/>
    <property type="project" value="UniProtKB-UniRule"/>
</dbReference>
<dbReference type="GO" id="GO:0006226">
    <property type="term" value="P:dUMP biosynthetic process"/>
    <property type="evidence" value="ECO:0007669"/>
    <property type="project" value="UniProtKB-UniRule"/>
</dbReference>
<dbReference type="GO" id="GO:0046081">
    <property type="term" value="P:dUTP catabolic process"/>
    <property type="evidence" value="ECO:0007669"/>
    <property type="project" value="InterPro"/>
</dbReference>
<dbReference type="CDD" id="cd07557">
    <property type="entry name" value="trimeric_dUTPase"/>
    <property type="match status" value="1"/>
</dbReference>
<dbReference type="FunFam" id="2.70.40.10:FF:000002">
    <property type="entry name" value="dUTP diphosphatase"/>
    <property type="match status" value="1"/>
</dbReference>
<dbReference type="Gene3D" id="2.70.40.10">
    <property type="match status" value="1"/>
</dbReference>
<dbReference type="HAMAP" id="MF_00116">
    <property type="entry name" value="dUTPase_bact"/>
    <property type="match status" value="1"/>
</dbReference>
<dbReference type="InterPro" id="IPR008181">
    <property type="entry name" value="dUTPase"/>
</dbReference>
<dbReference type="InterPro" id="IPR029054">
    <property type="entry name" value="dUTPase-like"/>
</dbReference>
<dbReference type="InterPro" id="IPR036157">
    <property type="entry name" value="dUTPase-like_sf"/>
</dbReference>
<dbReference type="InterPro" id="IPR033704">
    <property type="entry name" value="dUTPase_trimeric"/>
</dbReference>
<dbReference type="NCBIfam" id="TIGR00576">
    <property type="entry name" value="dut"/>
    <property type="match status" value="1"/>
</dbReference>
<dbReference type="NCBIfam" id="NF001862">
    <property type="entry name" value="PRK00601.1"/>
    <property type="match status" value="1"/>
</dbReference>
<dbReference type="PANTHER" id="PTHR11241">
    <property type="entry name" value="DEOXYURIDINE 5'-TRIPHOSPHATE NUCLEOTIDOHYDROLASE"/>
    <property type="match status" value="1"/>
</dbReference>
<dbReference type="PANTHER" id="PTHR11241:SF0">
    <property type="entry name" value="DEOXYURIDINE 5'-TRIPHOSPHATE NUCLEOTIDOHYDROLASE"/>
    <property type="match status" value="1"/>
</dbReference>
<dbReference type="Pfam" id="PF00692">
    <property type="entry name" value="dUTPase"/>
    <property type="match status" value="1"/>
</dbReference>
<dbReference type="SUPFAM" id="SSF51283">
    <property type="entry name" value="dUTPase-like"/>
    <property type="match status" value="1"/>
</dbReference>
<accession>A7MQ93</accession>
<comment type="function">
    <text evidence="1">This enzyme is involved in nucleotide metabolism: it produces dUMP, the immediate precursor of thymidine nucleotides and it decreases the intracellular concentration of dUTP so that uracil cannot be incorporated into DNA.</text>
</comment>
<comment type="catalytic activity">
    <reaction evidence="1">
        <text>dUTP + H2O = dUMP + diphosphate + H(+)</text>
        <dbReference type="Rhea" id="RHEA:10248"/>
        <dbReference type="ChEBI" id="CHEBI:15377"/>
        <dbReference type="ChEBI" id="CHEBI:15378"/>
        <dbReference type="ChEBI" id="CHEBI:33019"/>
        <dbReference type="ChEBI" id="CHEBI:61555"/>
        <dbReference type="ChEBI" id="CHEBI:246422"/>
        <dbReference type="EC" id="3.6.1.23"/>
    </reaction>
</comment>
<comment type="cofactor">
    <cofactor evidence="1">
        <name>Mg(2+)</name>
        <dbReference type="ChEBI" id="CHEBI:18420"/>
    </cofactor>
</comment>
<comment type="pathway">
    <text evidence="1">Pyrimidine metabolism; dUMP biosynthesis; dUMP from dCTP (dUTP route): step 2/2.</text>
</comment>
<comment type="similarity">
    <text evidence="1">Belongs to the dUTPase family.</text>
</comment>
<organism>
    <name type="scientific">Cronobacter sakazakii (strain ATCC BAA-894)</name>
    <name type="common">Enterobacter sakazakii</name>
    <dbReference type="NCBI Taxonomy" id="290339"/>
    <lineage>
        <taxon>Bacteria</taxon>
        <taxon>Pseudomonadati</taxon>
        <taxon>Pseudomonadota</taxon>
        <taxon>Gammaproteobacteria</taxon>
        <taxon>Enterobacterales</taxon>
        <taxon>Enterobacteriaceae</taxon>
        <taxon>Cronobacter</taxon>
    </lineage>
</organism>
<sequence>MMKKIDVKILDPRVGEQFPLPTYATSGSAGLDLRACLDESVELTPGATTLLPTGLAIHIADPSLAAVILPRSGLGHKHGVVLGNLVGLIDSDYQGQLMVSVWNRGQQSFTIEPGERIAQMVFVPVVQAEFNLVEDFTATDRGEGGFGHSGRK</sequence>
<proteinExistence type="inferred from homology"/>
<reference key="1">
    <citation type="journal article" date="2010" name="PLoS ONE">
        <title>Genome sequence of Cronobacter sakazakii BAA-894 and comparative genomic hybridization analysis with other Cronobacter species.</title>
        <authorList>
            <person name="Kucerova E."/>
            <person name="Clifton S.W."/>
            <person name="Xia X.Q."/>
            <person name="Long F."/>
            <person name="Porwollik S."/>
            <person name="Fulton L."/>
            <person name="Fronick C."/>
            <person name="Minx P."/>
            <person name="Kyung K."/>
            <person name="Warren W."/>
            <person name="Fulton R."/>
            <person name="Feng D."/>
            <person name="Wollam A."/>
            <person name="Shah N."/>
            <person name="Bhonagiri V."/>
            <person name="Nash W.E."/>
            <person name="Hallsworth-Pepin K."/>
            <person name="Wilson R.K."/>
            <person name="McClelland M."/>
            <person name="Forsythe S.J."/>
        </authorList>
    </citation>
    <scope>NUCLEOTIDE SEQUENCE [LARGE SCALE GENOMIC DNA]</scope>
    <source>
        <strain>ATCC BAA-894</strain>
    </source>
</reference>
<name>DUT_CROS8</name>
<evidence type="ECO:0000255" key="1">
    <source>
        <dbReference type="HAMAP-Rule" id="MF_00116"/>
    </source>
</evidence>